<reference key="1">
    <citation type="journal article" date="2001" name="Mech. Dev.">
        <title>Xenopus Enhancer of Zeste (XEZ); an anteriorly restricted polycomb gene with a role in neural patterning.</title>
        <authorList>
            <person name="Barnett M.W."/>
            <person name="Seville R.A."/>
            <person name="Nijjar S."/>
            <person name="Old R.W."/>
            <person name="Jones E.A."/>
        </authorList>
    </citation>
    <scope>NUCLEOTIDE SEQUENCE [MRNA]</scope>
    <scope>FUNCTION</scope>
    <scope>DEVELOPMENTAL STAGE</scope>
    <scope>INDUCTION</scope>
</reference>
<reference key="2">
    <citation type="submission" date="2004-10" db="EMBL/GenBank/DDBJ databases">
        <authorList>
            <consortium name="NIH - Xenopus Gene Collection (XGC) project"/>
        </authorList>
    </citation>
    <scope>NUCLEOTIDE SEQUENCE [LARGE SCALE MRNA]</scope>
    <source>
        <tissue>Ovary</tissue>
    </source>
</reference>
<accession>Q98SM3</accession>
<accession>Q5XH80</accession>
<gene>
    <name type="primary">ezh2-a</name>
    <name type="synonym">xez</name>
</gene>
<feature type="chain" id="PRO_0000345428" description="Histone-lysine N-methyltransferase EZH2">
    <location>
        <begin position="1"/>
        <end position="748"/>
    </location>
</feature>
<feature type="domain" description="CXC" evidence="4">
    <location>
        <begin position="505"/>
        <end position="607"/>
    </location>
</feature>
<feature type="domain" description="SET" evidence="3">
    <location>
        <begin position="614"/>
        <end position="729"/>
    </location>
</feature>
<feature type="region of interest" description="Disordered" evidence="5">
    <location>
        <begin position="184"/>
        <end position="220"/>
    </location>
</feature>
<feature type="region of interest" description="Disordered" evidence="5">
    <location>
        <begin position="342"/>
        <end position="428"/>
    </location>
</feature>
<feature type="compositionally biased region" description="Acidic residues" evidence="5">
    <location>
        <begin position="184"/>
        <end position="199"/>
    </location>
</feature>
<feature type="compositionally biased region" description="Basic and acidic residues" evidence="5">
    <location>
        <begin position="200"/>
        <end position="220"/>
    </location>
</feature>
<feature type="compositionally biased region" description="Basic residues" evidence="5">
    <location>
        <begin position="347"/>
        <end position="359"/>
    </location>
</feature>
<feature type="compositionally biased region" description="Polar residues" evidence="5">
    <location>
        <begin position="362"/>
        <end position="374"/>
    </location>
</feature>
<feature type="compositionally biased region" description="Basic and acidic residues" evidence="5">
    <location>
        <begin position="376"/>
        <end position="387"/>
    </location>
</feature>
<feature type="sequence conflict" description="In Ref. 2; AAH84193." evidence="7" ref="2">
    <original>A</original>
    <variation>R</variation>
    <location>
        <position position="25"/>
    </location>
</feature>
<feature type="sequence conflict" description="In Ref. 2; AAH84193." evidence="7" ref="2">
    <original>K</original>
    <variation>R</variation>
    <location>
        <position position="31"/>
    </location>
</feature>
<feature type="sequence conflict" description="In Ref. 2; AAH84193." evidence="7" ref="2">
    <original>P</original>
    <variation>R</variation>
    <location>
        <position position="290"/>
    </location>
</feature>
<organism>
    <name type="scientific">Xenopus laevis</name>
    <name type="common">African clawed frog</name>
    <dbReference type="NCBI Taxonomy" id="8355"/>
    <lineage>
        <taxon>Eukaryota</taxon>
        <taxon>Metazoa</taxon>
        <taxon>Chordata</taxon>
        <taxon>Craniata</taxon>
        <taxon>Vertebrata</taxon>
        <taxon>Euteleostomi</taxon>
        <taxon>Amphibia</taxon>
        <taxon>Batrachia</taxon>
        <taxon>Anura</taxon>
        <taxon>Pipoidea</taxon>
        <taxon>Pipidae</taxon>
        <taxon>Xenopodinae</taxon>
        <taxon>Xenopus</taxon>
        <taxon>Xenopus</taxon>
    </lineage>
</organism>
<name>EZH2A_XENLA</name>
<dbReference type="EC" id="2.1.1.356" evidence="1"/>
<dbReference type="EMBL" id="AF351126">
    <property type="protein sequence ID" value="AAK30208.1"/>
    <property type="molecule type" value="mRNA"/>
</dbReference>
<dbReference type="EMBL" id="BC084193">
    <property type="protein sequence ID" value="AAH84193.1"/>
    <property type="molecule type" value="mRNA"/>
</dbReference>
<dbReference type="RefSeq" id="NP_001083886.1">
    <property type="nucleotide sequence ID" value="NM_001090417.1"/>
</dbReference>
<dbReference type="RefSeq" id="XP_018121884.1">
    <property type="nucleotide sequence ID" value="XM_018266395.1"/>
</dbReference>
<dbReference type="SMR" id="Q98SM3"/>
<dbReference type="BioGRID" id="100499">
    <property type="interactions" value="6"/>
</dbReference>
<dbReference type="GeneID" id="399174"/>
<dbReference type="KEGG" id="xla:399174"/>
<dbReference type="AGR" id="Xenbase:XB-GENE-956220"/>
<dbReference type="CTD" id="399174"/>
<dbReference type="Xenbase" id="XB-GENE-956220">
    <property type="gene designation" value="ezh2.L"/>
</dbReference>
<dbReference type="OrthoDB" id="6141102at2759"/>
<dbReference type="Proteomes" id="UP000186698">
    <property type="component" value="Chromosome 6L"/>
</dbReference>
<dbReference type="Bgee" id="399174">
    <property type="expression patterns" value="Expressed in gastrula and 19 other cell types or tissues"/>
</dbReference>
<dbReference type="GO" id="GO:0035098">
    <property type="term" value="C:ESC/E(Z) complex"/>
    <property type="evidence" value="ECO:0000250"/>
    <property type="project" value="UniProtKB"/>
</dbReference>
<dbReference type="GO" id="GO:0005634">
    <property type="term" value="C:nucleus"/>
    <property type="evidence" value="ECO:0000318"/>
    <property type="project" value="GO_Central"/>
</dbReference>
<dbReference type="GO" id="GO:0003682">
    <property type="term" value="F:chromatin binding"/>
    <property type="evidence" value="ECO:0000318"/>
    <property type="project" value="GO_Central"/>
</dbReference>
<dbReference type="GO" id="GO:0046976">
    <property type="term" value="F:histone H3K27 methyltransferase activity"/>
    <property type="evidence" value="ECO:0000318"/>
    <property type="project" value="GO_Central"/>
</dbReference>
<dbReference type="GO" id="GO:0140951">
    <property type="term" value="F:histone H3K27 trimethyltransferase activity"/>
    <property type="evidence" value="ECO:0007669"/>
    <property type="project" value="UniProtKB-EC"/>
</dbReference>
<dbReference type="GO" id="GO:1990841">
    <property type="term" value="F:promoter-specific chromatin binding"/>
    <property type="evidence" value="ECO:0000250"/>
    <property type="project" value="UniProtKB"/>
</dbReference>
<dbReference type="GO" id="GO:0031507">
    <property type="term" value="P:heterochromatin formation"/>
    <property type="evidence" value="ECO:0000318"/>
    <property type="project" value="GO_Central"/>
</dbReference>
<dbReference type="GO" id="GO:0032259">
    <property type="term" value="P:methylation"/>
    <property type="evidence" value="ECO:0007669"/>
    <property type="project" value="UniProtKB-KW"/>
</dbReference>
<dbReference type="GO" id="GO:0045814">
    <property type="term" value="P:negative regulation of gene expression, epigenetic"/>
    <property type="evidence" value="ECO:0000250"/>
    <property type="project" value="UniProtKB"/>
</dbReference>
<dbReference type="GO" id="GO:0048511">
    <property type="term" value="P:rhythmic process"/>
    <property type="evidence" value="ECO:0007669"/>
    <property type="project" value="UniProtKB-KW"/>
</dbReference>
<dbReference type="CDD" id="cd00167">
    <property type="entry name" value="SANT"/>
    <property type="match status" value="1"/>
</dbReference>
<dbReference type="CDD" id="cd19218">
    <property type="entry name" value="SET_EZH2"/>
    <property type="match status" value="1"/>
</dbReference>
<dbReference type="FunFam" id="2.170.270.10:FF:000001">
    <property type="entry name" value="Putative histone-lysine N-methyltransferase EZH2"/>
    <property type="match status" value="1"/>
</dbReference>
<dbReference type="Gene3D" id="1.20.58.1880">
    <property type="match status" value="1"/>
</dbReference>
<dbReference type="Gene3D" id="2.170.270.10">
    <property type="entry name" value="SET domain"/>
    <property type="match status" value="1"/>
</dbReference>
<dbReference type="InterPro" id="IPR026489">
    <property type="entry name" value="CXC_dom"/>
</dbReference>
<dbReference type="InterPro" id="IPR045318">
    <property type="entry name" value="EZH1/2-like"/>
</dbReference>
<dbReference type="InterPro" id="IPR048358">
    <property type="entry name" value="EZH1/2_MCSS"/>
</dbReference>
<dbReference type="InterPro" id="IPR021654">
    <property type="entry name" value="EZH1/EZH2"/>
</dbReference>
<dbReference type="InterPro" id="IPR044439">
    <property type="entry name" value="EZH2_SET"/>
</dbReference>
<dbReference type="InterPro" id="IPR041343">
    <property type="entry name" value="PRC2_HTH_1"/>
</dbReference>
<dbReference type="InterPro" id="IPR041355">
    <property type="entry name" value="Pre-SET_CXC"/>
</dbReference>
<dbReference type="InterPro" id="IPR001005">
    <property type="entry name" value="SANT/Myb"/>
</dbReference>
<dbReference type="InterPro" id="IPR001214">
    <property type="entry name" value="SET_dom"/>
</dbReference>
<dbReference type="InterPro" id="IPR046341">
    <property type="entry name" value="SET_dom_sf"/>
</dbReference>
<dbReference type="InterPro" id="IPR033467">
    <property type="entry name" value="Tesmin/TSO1-like_CXC"/>
</dbReference>
<dbReference type="PANTHER" id="PTHR45747">
    <property type="entry name" value="HISTONE-LYSINE N-METHYLTRANSFERASE E(Z)"/>
    <property type="match status" value="1"/>
</dbReference>
<dbReference type="PANTHER" id="PTHR45747:SF3">
    <property type="entry name" value="HISTONE-LYSINE N-METHYLTRANSFERASE EZH2"/>
    <property type="match status" value="1"/>
</dbReference>
<dbReference type="Pfam" id="PF21358">
    <property type="entry name" value="Ezh2_MCSS"/>
    <property type="match status" value="1"/>
</dbReference>
<dbReference type="Pfam" id="PF11616">
    <property type="entry name" value="EZH2_WD-Binding"/>
    <property type="match status" value="1"/>
</dbReference>
<dbReference type="Pfam" id="PF18118">
    <property type="entry name" value="PRC2_HTH_1"/>
    <property type="match status" value="1"/>
</dbReference>
<dbReference type="Pfam" id="PF18264">
    <property type="entry name" value="preSET_CXC"/>
    <property type="match status" value="1"/>
</dbReference>
<dbReference type="Pfam" id="PF00856">
    <property type="entry name" value="SET"/>
    <property type="match status" value="1"/>
</dbReference>
<dbReference type="SMART" id="SM01114">
    <property type="entry name" value="CXC"/>
    <property type="match status" value="1"/>
</dbReference>
<dbReference type="SMART" id="SM00717">
    <property type="entry name" value="SANT"/>
    <property type="match status" value="2"/>
</dbReference>
<dbReference type="SMART" id="SM00317">
    <property type="entry name" value="SET"/>
    <property type="match status" value="1"/>
</dbReference>
<dbReference type="SUPFAM" id="SSF82199">
    <property type="entry name" value="SET domain"/>
    <property type="match status" value="1"/>
</dbReference>
<dbReference type="PROSITE" id="PS51633">
    <property type="entry name" value="CXC"/>
    <property type="match status" value="1"/>
</dbReference>
<dbReference type="PROSITE" id="PS50280">
    <property type="entry name" value="SET"/>
    <property type="match status" value="1"/>
</dbReference>
<protein>
    <recommendedName>
        <fullName>Histone-lysine N-methyltransferase EZH2</fullName>
        <ecNumber evidence="1">2.1.1.356</ecNumber>
    </recommendedName>
    <alternativeName>
        <fullName>Enhancer of zeste homolog 2-A</fullName>
    </alternativeName>
</protein>
<proteinExistence type="evidence at transcript level"/>
<comment type="function">
    <text evidence="2 6">Polycomb group (PcG) protein (By similarity). Catalytic subunit of the prc2/eed-ezh2 complex, which methylates 'Lys-9' and 'Lys-27' of histone H3, leading to transcriptional repression of the affected target gene (By similarity). May repress transcription of the egr2 and en2 genes. May regulate the circadian clock via histone methylation at the promoter of the circadian genes (By similarity).</text>
</comment>
<comment type="catalytic activity">
    <reaction evidence="1">
        <text>L-lysyl(27)-[histone H3] + 3 S-adenosyl-L-methionine = N(6),N(6),N(6)-trimethyl-L-lysyl(27)-[histone H3] + 3 S-adenosyl-L-homocysteine + 3 H(+)</text>
        <dbReference type="Rhea" id="RHEA:60292"/>
        <dbReference type="Rhea" id="RHEA-COMP:15535"/>
        <dbReference type="Rhea" id="RHEA-COMP:15548"/>
        <dbReference type="ChEBI" id="CHEBI:15378"/>
        <dbReference type="ChEBI" id="CHEBI:29969"/>
        <dbReference type="ChEBI" id="CHEBI:57856"/>
        <dbReference type="ChEBI" id="CHEBI:59789"/>
        <dbReference type="ChEBI" id="CHEBI:61961"/>
        <dbReference type="EC" id="2.1.1.356"/>
    </reaction>
</comment>
<comment type="subunit">
    <text evidence="1">Component of the prc2/eed-ezh2 complex.</text>
</comment>
<comment type="subcellular location">
    <subcellularLocation>
        <location evidence="1">Nucleus</location>
    </subcellularLocation>
</comment>
<comment type="developmental stage">
    <text evidence="6">Does not appear to be maternally expressed. Zygotic expression begins at late blastula, increases at mid and late gastrula, and peaks in the early neurula. Expression is restricted to the anterior nervous system.</text>
</comment>
<comment type="induction">
    <text evidence="6">Induced by inhibition of BMP signaling.</text>
</comment>
<comment type="similarity">
    <text evidence="3">Belongs to the class V-like SAM-binding methyltransferase superfamily. Histone-lysine methyltransferase family. EZ subfamily.</text>
</comment>
<sequence length="748" mass="85383">MGQTGKKSEKGPVCWRKRVKSEYMALRQLKKFRRADEVKSMFNTNRQKIMERTEILNQEWKQRRIQPVHIMTTVSSLRGTRECSVTSDLDFPKQVIPLKTLTAVASVPIMYSWSPLQQNFMVEDETVLHNIPYMGDEVLDQDGTFIEELIKNYDGKVHGDRECGFINDEIFVELVNALAQYSDYEDDEDGDDNQDDEQDDTAKDQDDNMEDKETQPLRKFPSDKIFEAISSMFPDKGTSEELKEKYKELTEQQLPGALPPECTPNIDGPNAKSVQREQSLHSFHTLFCRPCFKYDCFLHPFHATPNTYKRKNNEAANDGKPCGPHCYQLLEGAREFAAALTAERIKTPPKRPSGRRRGRLPNNTSRPSTPTVNVSEAKDTDSDREAGTETGGESNDKEEEEKKDETSSSSEANSRCQTPIKMKPNIEPPENVEWSGAEASLFRVLIGTYYDNFCAIARLIGTKTCRQVYEFRVKESSIISPVIAEDVDTPPRKKKRKHRLWAAHCRKIQLKKDGSSNHVYNYQPCDHPRQPCDSSCPCVIAQNFCEKFCQCSSECQNRFPGCRCKAQCNTKQCPCYLAVRECDPDLCLTCGAADHWDSKNVSCKNCSIQRGSKKHLLLAPSDVAGWGIFINDTVQKNEFISEYCGEIISQDEADRRGKVYDKYMCSFLFNLNNDFVVDATRKGNKIRFANHSVNPNCYAKVMMVNGDHRIGIFAKRAIQTGEELFFDYRYSQADALKYVGIEREMEIP</sequence>
<keyword id="KW-0090">Biological rhythms</keyword>
<keyword id="KW-0156">Chromatin regulator</keyword>
<keyword id="KW-0489">Methyltransferase</keyword>
<keyword id="KW-0539">Nucleus</keyword>
<keyword id="KW-1185">Reference proteome</keyword>
<keyword id="KW-0678">Repressor</keyword>
<keyword id="KW-0949">S-adenosyl-L-methionine</keyword>
<keyword id="KW-0804">Transcription</keyword>
<keyword id="KW-0805">Transcription regulation</keyword>
<keyword id="KW-0808">Transferase</keyword>
<evidence type="ECO:0000250" key="1">
    <source>
        <dbReference type="UniProtKB" id="Q15910"/>
    </source>
</evidence>
<evidence type="ECO:0000250" key="2">
    <source>
        <dbReference type="UniProtKB" id="Q61188"/>
    </source>
</evidence>
<evidence type="ECO:0000255" key="3">
    <source>
        <dbReference type="PROSITE-ProRule" id="PRU00190"/>
    </source>
</evidence>
<evidence type="ECO:0000255" key="4">
    <source>
        <dbReference type="PROSITE-ProRule" id="PRU00970"/>
    </source>
</evidence>
<evidence type="ECO:0000256" key="5">
    <source>
        <dbReference type="SAM" id="MobiDB-lite"/>
    </source>
</evidence>
<evidence type="ECO:0000269" key="6">
    <source>
    </source>
</evidence>
<evidence type="ECO:0000305" key="7"/>